<geneLocation type="mitochondrion"/>
<proteinExistence type="inferred from homology"/>
<name>NU4M_SISMI</name>
<accession>O03778</accession>
<gene>
    <name type="primary">MT-ND4</name>
    <name type="synonym">MTND4</name>
    <name type="synonym">NADH4</name>
    <name type="synonym">ND4</name>
</gene>
<dbReference type="EC" id="7.1.1.2"/>
<dbReference type="EMBL" id="U41889">
    <property type="protein sequence ID" value="AAB46652.1"/>
    <property type="molecule type" value="Genomic_DNA"/>
</dbReference>
<dbReference type="SMR" id="O03778"/>
<dbReference type="GO" id="GO:0031966">
    <property type="term" value="C:mitochondrial membrane"/>
    <property type="evidence" value="ECO:0007669"/>
    <property type="project" value="UniProtKB-SubCell"/>
</dbReference>
<dbReference type="GO" id="GO:0008137">
    <property type="term" value="F:NADH dehydrogenase (ubiquinone) activity"/>
    <property type="evidence" value="ECO:0007669"/>
    <property type="project" value="UniProtKB-EC"/>
</dbReference>
<dbReference type="GO" id="GO:0048039">
    <property type="term" value="F:ubiquinone binding"/>
    <property type="evidence" value="ECO:0007669"/>
    <property type="project" value="TreeGrafter"/>
</dbReference>
<dbReference type="GO" id="GO:0042773">
    <property type="term" value="P:ATP synthesis coupled electron transport"/>
    <property type="evidence" value="ECO:0007669"/>
    <property type="project" value="InterPro"/>
</dbReference>
<dbReference type="GO" id="GO:0015990">
    <property type="term" value="P:electron transport coupled proton transport"/>
    <property type="evidence" value="ECO:0007669"/>
    <property type="project" value="TreeGrafter"/>
</dbReference>
<dbReference type="InterPro" id="IPR003918">
    <property type="entry name" value="NADH_UbQ_OxRdtase"/>
</dbReference>
<dbReference type="InterPro" id="IPR001750">
    <property type="entry name" value="ND/Mrp_TM"/>
</dbReference>
<dbReference type="PANTHER" id="PTHR43507">
    <property type="entry name" value="NADH-UBIQUINONE OXIDOREDUCTASE CHAIN 4"/>
    <property type="match status" value="1"/>
</dbReference>
<dbReference type="PANTHER" id="PTHR43507:SF20">
    <property type="entry name" value="NADH-UBIQUINONE OXIDOREDUCTASE CHAIN 4"/>
    <property type="match status" value="1"/>
</dbReference>
<dbReference type="Pfam" id="PF00361">
    <property type="entry name" value="Proton_antipo_M"/>
    <property type="match status" value="1"/>
</dbReference>
<comment type="function">
    <text evidence="1">Core subunit of the mitochondrial membrane respiratory chain NADH dehydrogenase (Complex I) that is believed to belong to the minimal assembly required for catalysis. Complex I functions in the transfer of electrons from NADH to the respiratory chain. The immediate electron acceptor for the enzyme is believed to be ubiquinone (By similarity).</text>
</comment>
<comment type="catalytic activity">
    <reaction>
        <text>a ubiquinone + NADH + 5 H(+)(in) = a ubiquinol + NAD(+) + 4 H(+)(out)</text>
        <dbReference type="Rhea" id="RHEA:29091"/>
        <dbReference type="Rhea" id="RHEA-COMP:9565"/>
        <dbReference type="Rhea" id="RHEA-COMP:9566"/>
        <dbReference type="ChEBI" id="CHEBI:15378"/>
        <dbReference type="ChEBI" id="CHEBI:16389"/>
        <dbReference type="ChEBI" id="CHEBI:17976"/>
        <dbReference type="ChEBI" id="CHEBI:57540"/>
        <dbReference type="ChEBI" id="CHEBI:57945"/>
        <dbReference type="EC" id="7.1.1.2"/>
    </reaction>
</comment>
<comment type="subcellular location">
    <subcellularLocation>
        <location evidence="1">Mitochondrion membrane</location>
        <topology evidence="1">Multi-pass membrane protein</topology>
    </subcellularLocation>
</comment>
<comment type="similarity">
    <text evidence="3">Belongs to the complex I subunit 4 family.</text>
</comment>
<evidence type="ECO:0000250" key="1"/>
<evidence type="ECO:0000255" key="2"/>
<evidence type="ECO:0000305" key="3"/>
<reference key="1">
    <citation type="journal article" date="1996" name="Copeia">
        <title>Crotaline intergeneric relationships based on mitochondrial DNA sequence data.</title>
        <authorList>
            <person name="Kraus F."/>
            <person name="Mink D.G."/>
            <person name="Brown W.M."/>
        </authorList>
    </citation>
    <scope>NUCLEOTIDE SEQUENCE [GENOMIC DNA]</scope>
</reference>
<organism>
    <name type="scientific">Sistrurus miliarius</name>
    <name type="common">Pigmy rattlesnake</name>
    <name type="synonym">Crotalus miliarius</name>
    <dbReference type="NCBI Taxonomy" id="8758"/>
    <lineage>
        <taxon>Eukaryota</taxon>
        <taxon>Metazoa</taxon>
        <taxon>Chordata</taxon>
        <taxon>Craniata</taxon>
        <taxon>Vertebrata</taxon>
        <taxon>Euteleostomi</taxon>
        <taxon>Lepidosauria</taxon>
        <taxon>Squamata</taxon>
        <taxon>Bifurcata</taxon>
        <taxon>Unidentata</taxon>
        <taxon>Episquamata</taxon>
        <taxon>Toxicofera</taxon>
        <taxon>Serpentes</taxon>
        <taxon>Colubroidea</taxon>
        <taxon>Viperidae</taxon>
        <taxon>Crotalinae</taxon>
        <taxon>Sistrurus</taxon>
    </lineage>
</organism>
<protein>
    <recommendedName>
        <fullName>NADH-ubiquinone oxidoreductase chain 4</fullName>
        <ecNumber>7.1.1.2</ecNumber>
    </recommendedName>
    <alternativeName>
        <fullName>NADH dehydrogenase subunit 4</fullName>
    </alternativeName>
</protein>
<keyword id="KW-0249">Electron transport</keyword>
<keyword id="KW-0472">Membrane</keyword>
<keyword id="KW-0496">Mitochondrion</keyword>
<keyword id="KW-0520">NAD</keyword>
<keyword id="KW-0679">Respiratory chain</keyword>
<keyword id="KW-1278">Translocase</keyword>
<keyword id="KW-0812">Transmembrane</keyword>
<keyword id="KW-1133">Transmembrane helix</keyword>
<keyword id="KW-0813">Transport</keyword>
<keyword id="KW-0830">Ubiquinone</keyword>
<sequence>PIAGSMILAAILLKLGGYGIIRLMQIFPTTKTDVFLPFIVLALWGAILANLTCLQQTDLKSLIAYSSISHMGLVVAAIIIQTPWGLSGAMALMIAHGFTSSALFCLANTTYERTHTRILILTRGLHNMMPMATTWWLMANLMNIAIPPSMNFTGELLILSTLFNWCPTTIIMLGLSMLITASYSLHMFLSTQMGPTLINNLTEPTHSREHLLMTLHLIPLLMISFKPELVT</sequence>
<feature type="chain" id="PRO_0000117988" description="NADH-ubiquinone oxidoreductase chain 4">
    <location>
        <begin position="1" status="less than"/>
        <end position="231" status="greater than"/>
    </location>
</feature>
<feature type="transmembrane region" description="Helical" evidence="2">
    <location>
        <begin position="1"/>
        <end position="21"/>
    </location>
</feature>
<feature type="transmembrane region" description="Helical" evidence="2">
    <location>
        <begin position="34"/>
        <end position="54"/>
    </location>
</feature>
<feature type="transmembrane region" description="Helical" evidence="2">
    <location>
        <begin position="63"/>
        <end position="85"/>
    </location>
</feature>
<feature type="transmembrane region" description="Helical" evidence="2">
    <location>
        <begin position="89"/>
        <end position="111"/>
    </location>
</feature>
<feature type="transmembrane region" description="Helical" evidence="2">
    <location>
        <begin position="128"/>
        <end position="148"/>
    </location>
</feature>
<feature type="transmembrane region" description="Helical" evidence="2">
    <location>
        <begin position="169"/>
        <end position="189"/>
    </location>
</feature>
<feature type="transmembrane region" description="Helical" evidence="2">
    <location>
        <begin position="211"/>
        <end position="231"/>
    </location>
</feature>
<feature type="non-terminal residue">
    <location>
        <position position="1"/>
    </location>
</feature>
<feature type="non-terminal residue">
    <location>
        <position position="231"/>
    </location>
</feature>